<gene>
    <name type="primary">yciC</name>
    <name type="ordered locus">c1721</name>
</gene>
<name>YCIC_ECOL6</name>
<comment type="subcellular location">
    <subcellularLocation>
        <location evidence="1">Cell inner membrane</location>
        <topology evidence="1">Multi-pass membrane protein</topology>
    </subcellularLocation>
</comment>
<comment type="similarity">
    <text evidence="3">Belongs to the UPF0259 family.</text>
</comment>
<feature type="chain" id="PRO_0000206515" description="UPF0259 membrane protein YciC">
    <location>
        <begin position="1"/>
        <end position="247"/>
    </location>
</feature>
<feature type="topological domain" description="Cytoplasmic" evidence="2">
    <location>
        <begin position="1"/>
        <end position="19"/>
    </location>
</feature>
<feature type="transmembrane region" description="Helical" evidence="2">
    <location>
        <begin position="20"/>
        <end position="40"/>
    </location>
</feature>
<feature type="topological domain" description="Periplasmic" evidence="2">
    <location>
        <begin position="41"/>
        <end position="86"/>
    </location>
</feature>
<feature type="transmembrane region" description="Helical" evidence="2">
    <location>
        <begin position="87"/>
        <end position="107"/>
    </location>
</feature>
<feature type="topological domain" description="Cytoplasmic" evidence="2">
    <location>
        <begin position="108"/>
        <end position="117"/>
    </location>
</feature>
<feature type="transmembrane region" description="Helical" evidence="2">
    <location>
        <begin position="118"/>
        <end position="140"/>
    </location>
</feature>
<feature type="topological domain" description="Periplasmic" evidence="2">
    <location>
        <begin position="141"/>
        <end position="151"/>
    </location>
</feature>
<feature type="transmembrane region" description="Helical" evidence="2">
    <location>
        <begin position="152"/>
        <end position="172"/>
    </location>
</feature>
<feature type="topological domain" description="Cytoplasmic" evidence="2">
    <location>
        <begin position="173"/>
        <end position="186"/>
    </location>
</feature>
<feature type="transmembrane region" description="Helical" evidence="2">
    <location>
        <begin position="187"/>
        <end position="209"/>
    </location>
</feature>
<feature type="topological domain" description="Periplasmic" evidence="2">
    <location>
        <begin position="210"/>
        <end position="224"/>
    </location>
</feature>
<feature type="transmembrane region" description="Helical" evidence="2">
    <location>
        <begin position="225"/>
        <end position="245"/>
    </location>
</feature>
<feature type="topological domain" description="Cytoplasmic" evidence="2">
    <location>
        <begin position="246"/>
        <end position="247"/>
    </location>
</feature>
<proteinExistence type="inferred from homology"/>
<accession>Q8FHW3</accession>
<evidence type="ECO:0000250" key="1"/>
<evidence type="ECO:0000255" key="2"/>
<evidence type="ECO:0000305" key="3"/>
<protein>
    <recommendedName>
        <fullName>UPF0259 membrane protein YciC</fullName>
    </recommendedName>
</protein>
<dbReference type="EMBL" id="AE014075">
    <property type="protein sequence ID" value="AAN80188.1"/>
    <property type="molecule type" value="Genomic_DNA"/>
</dbReference>
<dbReference type="RefSeq" id="WP_000028519.1">
    <property type="nucleotide sequence ID" value="NZ_CP051263.1"/>
</dbReference>
<dbReference type="STRING" id="199310.c1721"/>
<dbReference type="KEGG" id="ecc:c1721"/>
<dbReference type="eggNOG" id="ENOG502Z96Y">
    <property type="taxonomic scope" value="Bacteria"/>
</dbReference>
<dbReference type="HOGENOM" id="CLU_073287_0_0_6"/>
<dbReference type="BioCyc" id="ECOL199310:C1721-MONOMER"/>
<dbReference type="Proteomes" id="UP000001410">
    <property type="component" value="Chromosome"/>
</dbReference>
<dbReference type="GO" id="GO:0005886">
    <property type="term" value="C:plasma membrane"/>
    <property type="evidence" value="ECO:0007669"/>
    <property type="project" value="UniProtKB-SubCell"/>
</dbReference>
<dbReference type="HAMAP" id="MF_01067">
    <property type="entry name" value="UPF0259"/>
    <property type="match status" value="1"/>
</dbReference>
<dbReference type="InterPro" id="IPR009627">
    <property type="entry name" value="UPF0259"/>
</dbReference>
<dbReference type="NCBIfam" id="NF002774">
    <property type="entry name" value="PRK02868.1"/>
    <property type="match status" value="1"/>
</dbReference>
<dbReference type="Pfam" id="PF06790">
    <property type="entry name" value="UPF0259"/>
    <property type="match status" value="1"/>
</dbReference>
<reference key="1">
    <citation type="journal article" date="2002" name="Proc. Natl. Acad. Sci. U.S.A.">
        <title>Extensive mosaic structure revealed by the complete genome sequence of uropathogenic Escherichia coli.</title>
        <authorList>
            <person name="Welch R.A."/>
            <person name="Burland V."/>
            <person name="Plunkett G. III"/>
            <person name="Redford P."/>
            <person name="Roesch P."/>
            <person name="Rasko D."/>
            <person name="Buckles E.L."/>
            <person name="Liou S.-R."/>
            <person name="Boutin A."/>
            <person name="Hackett J."/>
            <person name="Stroud D."/>
            <person name="Mayhew G.F."/>
            <person name="Rose D.J."/>
            <person name="Zhou S."/>
            <person name="Schwartz D.C."/>
            <person name="Perna N.T."/>
            <person name="Mobley H.L.T."/>
            <person name="Donnenberg M.S."/>
            <person name="Blattner F.R."/>
        </authorList>
    </citation>
    <scope>NUCLEOTIDE SEQUENCE [LARGE SCALE GENOMIC DNA]</scope>
    <source>
        <strain>CFT073 / ATCC 700928 / UPEC</strain>
    </source>
</reference>
<sequence>MSITAQSVYRDTGNFFRNQFMTILLISLLCAFITVVLGHVFSPSDAQLAQLNDGVPVSGSSGLFDLVQNMSPEQQQILLQASAASTFSGLIGNAILAGGVILIIQLVSAGQRVSALRAIGASAPILPKLFILIFLTTLLVQIGIMLVVVPGIIMAILLALAPVMLVQDKMGVFASMRSSMRLTWANMRLVAPAVLSWLLAKTLLLLFASSFAALTPEIGAVLANTLSNLISAVLLIYLFRLYMLIRQ</sequence>
<organism>
    <name type="scientific">Escherichia coli O6:H1 (strain CFT073 / ATCC 700928 / UPEC)</name>
    <dbReference type="NCBI Taxonomy" id="199310"/>
    <lineage>
        <taxon>Bacteria</taxon>
        <taxon>Pseudomonadati</taxon>
        <taxon>Pseudomonadota</taxon>
        <taxon>Gammaproteobacteria</taxon>
        <taxon>Enterobacterales</taxon>
        <taxon>Enterobacteriaceae</taxon>
        <taxon>Escherichia</taxon>
    </lineage>
</organism>
<keyword id="KW-0997">Cell inner membrane</keyword>
<keyword id="KW-1003">Cell membrane</keyword>
<keyword id="KW-0472">Membrane</keyword>
<keyword id="KW-1185">Reference proteome</keyword>
<keyword id="KW-0812">Transmembrane</keyword>
<keyword id="KW-1133">Transmembrane helix</keyword>